<organism>
    <name type="scientific">Phytoplasma mali (strain AT)</name>
    <dbReference type="NCBI Taxonomy" id="482235"/>
    <lineage>
        <taxon>Bacteria</taxon>
        <taxon>Bacillati</taxon>
        <taxon>Mycoplasmatota</taxon>
        <taxon>Mollicutes</taxon>
        <taxon>Acholeplasmatales</taxon>
        <taxon>Acholeplasmataceae</taxon>
        <taxon>Candidatus Phytoplasma</taxon>
        <taxon>16SrX (Apple proliferation group)</taxon>
    </lineage>
</organism>
<accession>B3QZG8</accession>
<evidence type="ECO:0000255" key="1">
    <source>
        <dbReference type="HAMAP-Rule" id="MF_00362"/>
    </source>
</evidence>
<evidence type="ECO:0000305" key="2"/>
<keyword id="KW-1185">Reference proteome</keyword>
<keyword id="KW-0687">Ribonucleoprotein</keyword>
<keyword id="KW-0689">Ribosomal protein</keyword>
<keyword id="KW-0694">RNA-binding</keyword>
<keyword id="KW-0699">rRNA-binding</keyword>
<gene>
    <name evidence="1" type="primary">rplJ</name>
    <name type="ordered locus">ATP_00388</name>
</gene>
<sequence>MKLIIAEKIKAVEQLTDKLNQAKTVIIFEYTGIPVSFFTELRSELRKSDCEMKIYTNNIMKRAAKATNYDGLISYFKGNKALVYSSTDLISPAKIIYEFSKKNSMIKIISGVIENKVASLDEINSLASLPSKEILLTMLVSGMMTPLMQLSACLCMLSKIKK</sequence>
<name>RL10_PHYMT</name>
<dbReference type="EMBL" id="CU469464">
    <property type="protein sequence ID" value="CAP18575.1"/>
    <property type="molecule type" value="Genomic_DNA"/>
</dbReference>
<dbReference type="SMR" id="B3QZG8"/>
<dbReference type="STRING" id="37692.ATP_00388"/>
<dbReference type="KEGG" id="pml:ATP_00388"/>
<dbReference type="eggNOG" id="COG0244">
    <property type="taxonomic scope" value="Bacteria"/>
</dbReference>
<dbReference type="HOGENOM" id="CLU_092227_2_0_14"/>
<dbReference type="Proteomes" id="UP000002020">
    <property type="component" value="Chromosome"/>
</dbReference>
<dbReference type="GO" id="GO:1990904">
    <property type="term" value="C:ribonucleoprotein complex"/>
    <property type="evidence" value="ECO:0007669"/>
    <property type="project" value="UniProtKB-KW"/>
</dbReference>
<dbReference type="GO" id="GO:0005840">
    <property type="term" value="C:ribosome"/>
    <property type="evidence" value="ECO:0007669"/>
    <property type="project" value="UniProtKB-KW"/>
</dbReference>
<dbReference type="GO" id="GO:0070180">
    <property type="term" value="F:large ribosomal subunit rRNA binding"/>
    <property type="evidence" value="ECO:0007669"/>
    <property type="project" value="UniProtKB-UniRule"/>
</dbReference>
<dbReference type="GO" id="GO:0006412">
    <property type="term" value="P:translation"/>
    <property type="evidence" value="ECO:0007669"/>
    <property type="project" value="UniProtKB-UniRule"/>
</dbReference>
<dbReference type="CDD" id="cd05797">
    <property type="entry name" value="Ribosomal_L10"/>
    <property type="match status" value="1"/>
</dbReference>
<dbReference type="Gene3D" id="3.30.70.1730">
    <property type="match status" value="1"/>
</dbReference>
<dbReference type="HAMAP" id="MF_00362">
    <property type="entry name" value="Ribosomal_uL10"/>
    <property type="match status" value="1"/>
</dbReference>
<dbReference type="InterPro" id="IPR001790">
    <property type="entry name" value="Ribosomal_uL10"/>
</dbReference>
<dbReference type="InterPro" id="IPR043141">
    <property type="entry name" value="Ribosomal_uL10-like_sf"/>
</dbReference>
<dbReference type="InterPro" id="IPR022973">
    <property type="entry name" value="Ribosomal_uL10_bac"/>
</dbReference>
<dbReference type="InterPro" id="IPR047865">
    <property type="entry name" value="Ribosomal_uL10_bac_type"/>
</dbReference>
<dbReference type="NCBIfam" id="NF000955">
    <property type="entry name" value="PRK00099.1-1"/>
    <property type="match status" value="1"/>
</dbReference>
<dbReference type="PANTHER" id="PTHR11560">
    <property type="entry name" value="39S RIBOSOMAL PROTEIN L10, MITOCHONDRIAL"/>
    <property type="match status" value="1"/>
</dbReference>
<dbReference type="Pfam" id="PF00466">
    <property type="entry name" value="Ribosomal_L10"/>
    <property type="match status" value="1"/>
</dbReference>
<dbReference type="SUPFAM" id="SSF160369">
    <property type="entry name" value="Ribosomal protein L10-like"/>
    <property type="match status" value="1"/>
</dbReference>
<feature type="chain" id="PRO_1000195560" description="Large ribosomal subunit protein uL10">
    <location>
        <begin position="1"/>
        <end position="162"/>
    </location>
</feature>
<reference key="1">
    <citation type="journal article" date="2008" name="BMC Genomics">
        <title>The linear chromosome of the plant-pathogenic mycoplasma 'Candidatus Phytoplasma mali'.</title>
        <authorList>
            <person name="Kube M."/>
            <person name="Schneider B."/>
            <person name="Kuhl H."/>
            <person name="Dandekar T."/>
            <person name="Heitmann K."/>
            <person name="Migdoll A.M."/>
            <person name="Reinhardt R."/>
            <person name="Seemueller E."/>
        </authorList>
    </citation>
    <scope>NUCLEOTIDE SEQUENCE [LARGE SCALE GENOMIC DNA]</scope>
    <source>
        <strain>AT</strain>
    </source>
</reference>
<protein>
    <recommendedName>
        <fullName evidence="1">Large ribosomal subunit protein uL10</fullName>
    </recommendedName>
    <alternativeName>
        <fullName evidence="2">50S ribosomal protein L10</fullName>
    </alternativeName>
</protein>
<comment type="function">
    <text evidence="1">Forms part of the ribosomal stalk, playing a central role in the interaction of the ribosome with GTP-bound translation factors.</text>
</comment>
<comment type="subunit">
    <text evidence="1">Part of the ribosomal stalk of the 50S ribosomal subunit. The N-terminus interacts with L11 and the large rRNA to form the base of the stalk. The C-terminus forms an elongated spine to which L12 dimers bind in a sequential fashion forming a multimeric L10(L12)X complex.</text>
</comment>
<comment type="similarity">
    <text evidence="1">Belongs to the universal ribosomal protein uL10 family.</text>
</comment>
<proteinExistence type="inferred from homology"/>